<comment type="function">
    <text evidence="1">Channel that opens in response to stretch forces in the membrane lipid bilayer. May participate in the regulation of osmotic pressure changes within the cell.</text>
</comment>
<comment type="subunit">
    <text evidence="1">Homopentamer.</text>
</comment>
<comment type="subcellular location">
    <subcellularLocation>
        <location evidence="1">Cell inner membrane</location>
        <topology evidence="1">Multi-pass membrane protein</topology>
    </subcellularLocation>
</comment>
<comment type="similarity">
    <text evidence="1">Belongs to the MscL family.</text>
</comment>
<feature type="chain" id="PRO_0000238018" description="Large-conductance mechanosensitive channel">
    <location>
        <begin position="1"/>
        <end position="137"/>
    </location>
</feature>
<feature type="transmembrane region" description="Helical" evidence="1">
    <location>
        <begin position="9"/>
        <end position="29"/>
    </location>
</feature>
<feature type="transmembrane region" description="Helical" evidence="1">
    <location>
        <begin position="32"/>
        <end position="52"/>
    </location>
</feature>
<feature type="transmembrane region" description="Helical" evidence="1">
    <location>
        <begin position="54"/>
        <end position="74"/>
    </location>
</feature>
<feature type="transmembrane region" description="Helical" evidence="1">
    <location>
        <begin position="79"/>
        <end position="99"/>
    </location>
</feature>
<protein>
    <recommendedName>
        <fullName evidence="1">Large-conductance mechanosensitive channel</fullName>
    </recommendedName>
</protein>
<accession>Q4K5Q6</accession>
<name>MSCL_PSEF5</name>
<evidence type="ECO:0000255" key="1">
    <source>
        <dbReference type="HAMAP-Rule" id="MF_00115"/>
    </source>
</evidence>
<proteinExistence type="inferred from homology"/>
<gene>
    <name evidence="1" type="primary">mscL</name>
    <name type="ordered locus">PFL_5359</name>
</gene>
<reference key="1">
    <citation type="journal article" date="2005" name="Nat. Biotechnol.">
        <title>Complete genome sequence of the plant commensal Pseudomonas fluorescens Pf-5.</title>
        <authorList>
            <person name="Paulsen I.T."/>
            <person name="Press C.M."/>
            <person name="Ravel J."/>
            <person name="Kobayashi D.Y."/>
            <person name="Myers G.S.A."/>
            <person name="Mavrodi D.V."/>
            <person name="DeBoy R.T."/>
            <person name="Seshadri R."/>
            <person name="Ren Q."/>
            <person name="Madupu R."/>
            <person name="Dodson R.J."/>
            <person name="Durkin A.S."/>
            <person name="Brinkac L.M."/>
            <person name="Daugherty S.C."/>
            <person name="Sullivan S.A."/>
            <person name="Rosovitz M.J."/>
            <person name="Gwinn M.L."/>
            <person name="Zhou L."/>
            <person name="Schneider D.J."/>
            <person name="Cartinhour S.W."/>
            <person name="Nelson W.C."/>
            <person name="Weidman J."/>
            <person name="Watkins K."/>
            <person name="Tran K."/>
            <person name="Khouri H."/>
            <person name="Pierson E.A."/>
            <person name="Pierson L.S. III"/>
            <person name="Thomashow L.S."/>
            <person name="Loper J.E."/>
        </authorList>
    </citation>
    <scope>NUCLEOTIDE SEQUENCE [LARGE SCALE GENOMIC DNA]</scope>
    <source>
        <strain>ATCC BAA-477 / NRRL B-23932 / Pf-5</strain>
    </source>
</reference>
<organism>
    <name type="scientific">Pseudomonas fluorescens (strain ATCC BAA-477 / NRRL B-23932 / Pf-5)</name>
    <dbReference type="NCBI Taxonomy" id="220664"/>
    <lineage>
        <taxon>Bacteria</taxon>
        <taxon>Pseudomonadati</taxon>
        <taxon>Pseudomonadota</taxon>
        <taxon>Gammaproteobacteria</taxon>
        <taxon>Pseudomonadales</taxon>
        <taxon>Pseudomonadaceae</taxon>
        <taxon>Pseudomonas</taxon>
    </lineage>
</organism>
<keyword id="KW-0997">Cell inner membrane</keyword>
<keyword id="KW-1003">Cell membrane</keyword>
<keyword id="KW-0407">Ion channel</keyword>
<keyword id="KW-0406">Ion transport</keyword>
<keyword id="KW-0472">Membrane</keyword>
<keyword id="KW-0812">Transmembrane</keyword>
<keyword id="KW-1133">Transmembrane helix</keyword>
<keyword id="KW-0813">Transport</keyword>
<dbReference type="EMBL" id="CP000076">
    <property type="protein sequence ID" value="AAY94569.1"/>
    <property type="molecule type" value="Genomic_DNA"/>
</dbReference>
<dbReference type="RefSeq" id="WP_011063583.1">
    <property type="nucleotide sequence ID" value="NC_004129.6"/>
</dbReference>
<dbReference type="SMR" id="Q4K5Q6"/>
<dbReference type="STRING" id="220664.PFL_5359"/>
<dbReference type="GeneID" id="57478328"/>
<dbReference type="KEGG" id="pfl:PFL_5359"/>
<dbReference type="PATRIC" id="fig|220664.5.peg.5472"/>
<dbReference type="eggNOG" id="COG1970">
    <property type="taxonomic scope" value="Bacteria"/>
</dbReference>
<dbReference type="HOGENOM" id="CLU_095787_0_0_6"/>
<dbReference type="Proteomes" id="UP000008540">
    <property type="component" value="Chromosome"/>
</dbReference>
<dbReference type="GO" id="GO:0005886">
    <property type="term" value="C:plasma membrane"/>
    <property type="evidence" value="ECO:0007669"/>
    <property type="project" value="UniProtKB-SubCell"/>
</dbReference>
<dbReference type="GO" id="GO:0008381">
    <property type="term" value="F:mechanosensitive monoatomic ion channel activity"/>
    <property type="evidence" value="ECO:0007669"/>
    <property type="project" value="UniProtKB-UniRule"/>
</dbReference>
<dbReference type="FunFam" id="1.10.1200.120:FF:000001">
    <property type="entry name" value="Large-conductance mechanosensitive channel"/>
    <property type="match status" value="1"/>
</dbReference>
<dbReference type="Gene3D" id="1.10.1200.120">
    <property type="entry name" value="Large-conductance mechanosensitive channel, MscL, domain 1"/>
    <property type="match status" value="1"/>
</dbReference>
<dbReference type="HAMAP" id="MF_00115">
    <property type="entry name" value="MscL"/>
    <property type="match status" value="1"/>
</dbReference>
<dbReference type="InterPro" id="IPR019823">
    <property type="entry name" value="Mechanosensitive_channel_CS"/>
</dbReference>
<dbReference type="InterPro" id="IPR001185">
    <property type="entry name" value="MS_channel"/>
</dbReference>
<dbReference type="InterPro" id="IPR037673">
    <property type="entry name" value="MSC/AndL"/>
</dbReference>
<dbReference type="InterPro" id="IPR036019">
    <property type="entry name" value="MscL_channel"/>
</dbReference>
<dbReference type="NCBIfam" id="TIGR00220">
    <property type="entry name" value="mscL"/>
    <property type="match status" value="1"/>
</dbReference>
<dbReference type="NCBIfam" id="NF001843">
    <property type="entry name" value="PRK00567.1-4"/>
    <property type="match status" value="1"/>
</dbReference>
<dbReference type="PANTHER" id="PTHR30266:SF2">
    <property type="entry name" value="LARGE-CONDUCTANCE MECHANOSENSITIVE CHANNEL"/>
    <property type="match status" value="1"/>
</dbReference>
<dbReference type="PANTHER" id="PTHR30266">
    <property type="entry name" value="MECHANOSENSITIVE CHANNEL MSCL"/>
    <property type="match status" value="1"/>
</dbReference>
<dbReference type="Pfam" id="PF01741">
    <property type="entry name" value="MscL"/>
    <property type="match status" value="1"/>
</dbReference>
<dbReference type="PRINTS" id="PR01264">
    <property type="entry name" value="MECHCHANNEL"/>
</dbReference>
<dbReference type="SUPFAM" id="SSF81330">
    <property type="entry name" value="Gated mechanosensitive channel"/>
    <property type="match status" value="1"/>
</dbReference>
<dbReference type="PROSITE" id="PS01327">
    <property type="entry name" value="MSCL"/>
    <property type="match status" value="1"/>
</dbReference>
<sequence length="137" mass="14394">MGVLSEFKAFAVKGNVVDMAVGIIIGAAFGKIVSSFVGDVVMPPIGLLIGGVNFGDLAVTLKAAAGDTPAVVLAYGKFIQSIIDFVIIAFAIFMGVKVINRLKREEAVAPTLPPVPTKEEELLGEIRDLLKAQNNKP</sequence>